<evidence type="ECO:0000250" key="1">
    <source>
        <dbReference type="UniProtKB" id="A0A0K0MCJ4"/>
    </source>
</evidence>
<evidence type="ECO:0000255" key="2"/>
<evidence type="ECO:0000255" key="3">
    <source>
        <dbReference type="PROSITE-ProRule" id="PRU00258"/>
    </source>
</evidence>
<evidence type="ECO:0000255" key="4">
    <source>
        <dbReference type="PROSITE-ProRule" id="PRU01348"/>
    </source>
</evidence>
<evidence type="ECO:0000255" key="5">
    <source>
        <dbReference type="PROSITE-ProRule" id="PRU01363"/>
    </source>
</evidence>
<evidence type="ECO:0000256" key="6">
    <source>
        <dbReference type="SAM" id="MobiDB-lite"/>
    </source>
</evidence>
<evidence type="ECO:0000269" key="7">
    <source>
    </source>
</evidence>
<evidence type="ECO:0000269" key="8">
    <source>
    </source>
</evidence>
<evidence type="ECO:0000269" key="9">
    <source>
    </source>
</evidence>
<evidence type="ECO:0000269" key="10">
    <source>
    </source>
</evidence>
<evidence type="ECO:0000303" key="11">
    <source>
    </source>
</evidence>
<evidence type="ECO:0000303" key="12">
    <source>
    </source>
</evidence>
<evidence type="ECO:0000305" key="13"/>
<evidence type="ECO:0000305" key="14">
    <source>
    </source>
</evidence>
<sequence>MKDNTHSTTLIFFGNEFPNDDLKGLFRCLLRLSKDRRFRQLAAFLEESTLVLKKEVAALPQPLRDLVPHFHTVLPLAELGDFRQGPLGAAMESALLTVLELGMFIGHYEAEGRDWNLLEHNTTLAGLSIGLLAAAGVALSTNLAEVAQNGAECVRVSFRLGVYVSEISRKLEAPQADGTLLSWAHVVTGETKSAIQDELSKYNSESGTPELLKVFISAADKTSVSVSGPPSRMKACFSSSHLLRYSKSFALPVYDGLCHASHLYNEDSINTVINSAESVIPVSRPVQLSLHSSNTGQPFPAATAHELFQAIGKELLTGTIYLDNIIDGIIKRIEGFNPSDLQVETFRTSIVFKSVRAALEGEFPDLEIKITDLIPWAFRDYGPRLPRSFAHSKLAVVGMACRMPGGGNDTELFWEILEQGRDVHTTVPADRFDLSTHYDPSGKTDNAATTPYGNFVDKPGLFDAGFFNMSPKEAEQTDPMQRLALVTAYEALEMAGVVPGRTASSNPKRIGTYYGQASDDWRELNASQNIGTYAVTGGVRAFGNGRINYYFKFPGPSFNVDTACSSGLAAVQVACSALWAGEADTVLAGGLNIITDPDNYAGLGCGHFLSKTGQCKVWDETADGYCRADGIGSVVIKRLEDAEADNDNIIAVVLSAATNHSAEAISITHPHAGNQKDNYRQVIDMAAVNPLDVSYIELHGTGTQAGDAVESESVLDVFAPRSPPRRPDQLLQLGAVKSNIGHGEAAAGIASFLKVLLMYQKNMIPAHIGIHTVINPTIPKDLEQRRVRLTQTNTPWPRLPGKKRIAMVNSFGAHGGNTTVLLEDAPERNKDVARENRSTHTVVISAKSKKSLQANIANLALHLEENPDIDLGDLSYTTCARRIHYTLRVGFAVSSIAGLKEALRKAGEKEALAEVRPTPGDVPPVVFAFTGQGAFYQGIARELFESFSYFRDEVLQLDHIVQRLGFQSIVPVIDGSIGENPSATVSQLSIVVIEIALAHLWTLLLGMQPSAVIGHSLGEYAALVVAGVLSTADGIFLAGRRAQLIEKCCTAGSHAMLSVRASVSEISKLLGNAKYEISCQNTLNDTVIGGTKANLDAARQVLESSSIKCVPVDVPFAFHTEQVDPVLDQLTRVAETVHFKAPSIPIISPLLRSVVFDGKTINSSYLIRATREPVHFAGAIEAAQDLGMVNDKTVWVDVGPHPICASFVRSLIPKARVASSCRRNEDNYATMAKNLVALHLAGCTPVWDEYFRANEKAYNLLTLPKYAWNDVNYWIQYIGTWTLDKAHLKYTGTNGPPQVKPSSSALRTSLIHEIIEETIGEETATLKTVSDLQHPEFLEAVHGHRMNNCGVATSSIWTDMSLTVGEYLYNKLAPGSKVHMNVGELEVLHATVANPAKNCTQNLYLDAHLDLRTQKMSLAWFNVDPATGSKAAESYATGSVRFEADAEKWKSEWERLTHLVLGRIETLESMAKDGQASQLSKALSYALFKNVVDYADHYRGMERVVMHDYEAFCDIKLTPERRGMFHTPPHWIDSVSHLAGLIMNGSDASNTRDYFFVTPGYESFRLLAKLDPDVKYQSYVRMFPLPEANMYGGDLYILQDNQIIGMVGHFKFRRVPRLLMDRFFSAEAASKQSVAASASSAPKTATKHAPLPASKPAQAPAEPTPSSLPTVQAQNTSPPQQVTPSKPAMNGVKTPEEEKPGKADAEGPNGTTSQPEATGVVGQCLQLIANETGQSVNELTPDATFVQLGVDSLMSLVLSEKFRAELGLEVKSSLFLECPTVGDMMDWLEQYC</sequence>
<dbReference type="EC" id="2.3.1.-" evidence="8 9 14"/>
<dbReference type="EMBL" id="BN001301">
    <property type="protein sequence ID" value="CBF70387.1"/>
    <property type="molecule type" value="Genomic_DNA"/>
</dbReference>
<dbReference type="EMBL" id="AACD01000102">
    <property type="protein sequence ID" value="EAA57749.1"/>
    <property type="molecule type" value="Genomic_DNA"/>
</dbReference>
<dbReference type="RefSeq" id="XP_663604.1">
    <property type="nucleotide sequence ID" value="XM_658512.1"/>
</dbReference>
<dbReference type="SMR" id="Q5B0D0"/>
<dbReference type="STRING" id="227321.Q5B0D0"/>
<dbReference type="EnsemblFungi" id="CBF70387">
    <property type="protein sequence ID" value="CBF70387"/>
    <property type="gene ID" value="ANIA_06000"/>
</dbReference>
<dbReference type="GeneID" id="2871043"/>
<dbReference type="KEGG" id="ani:ANIA_06000"/>
<dbReference type="VEuPathDB" id="FungiDB:AN6000"/>
<dbReference type="eggNOG" id="KOG1202">
    <property type="taxonomic scope" value="Eukaryota"/>
</dbReference>
<dbReference type="HOGENOM" id="CLU_000022_6_1_1"/>
<dbReference type="InParanoid" id="Q5B0D0"/>
<dbReference type="OMA" id="LNTHYDP"/>
<dbReference type="OrthoDB" id="329835at2759"/>
<dbReference type="Proteomes" id="UP000000560">
    <property type="component" value="Chromosome I"/>
</dbReference>
<dbReference type="GO" id="GO:0004315">
    <property type="term" value="F:3-oxoacyl-[acyl-carrier-protein] synthase activity"/>
    <property type="evidence" value="ECO:0007669"/>
    <property type="project" value="InterPro"/>
</dbReference>
<dbReference type="GO" id="GO:0004312">
    <property type="term" value="F:fatty acid synthase activity"/>
    <property type="evidence" value="ECO:0000318"/>
    <property type="project" value="GO_Central"/>
</dbReference>
<dbReference type="GO" id="GO:0031177">
    <property type="term" value="F:phosphopantetheine binding"/>
    <property type="evidence" value="ECO:0007669"/>
    <property type="project" value="InterPro"/>
</dbReference>
<dbReference type="GO" id="GO:0036184">
    <property type="term" value="P:asperthecin biosynthetic process"/>
    <property type="evidence" value="ECO:0000315"/>
    <property type="project" value="AspGD"/>
</dbReference>
<dbReference type="GO" id="GO:0006633">
    <property type="term" value="P:fatty acid biosynthetic process"/>
    <property type="evidence" value="ECO:0000318"/>
    <property type="project" value="GO_Central"/>
</dbReference>
<dbReference type="GO" id="GO:0019748">
    <property type="term" value="P:secondary metabolic process"/>
    <property type="evidence" value="ECO:0000303"/>
    <property type="project" value="AspGD"/>
</dbReference>
<dbReference type="GO" id="GO:0044550">
    <property type="term" value="P:secondary metabolite biosynthetic process"/>
    <property type="evidence" value="ECO:0000318"/>
    <property type="project" value="GO_Central"/>
</dbReference>
<dbReference type="CDD" id="cd00833">
    <property type="entry name" value="PKS"/>
    <property type="match status" value="1"/>
</dbReference>
<dbReference type="FunFam" id="3.40.366.10:FF:000017">
    <property type="entry name" value="Non-reducing polyketide synthase aptA"/>
    <property type="match status" value="1"/>
</dbReference>
<dbReference type="FunFam" id="3.40.366.10:FF:000002">
    <property type="entry name" value="Probable polyketide synthase 2"/>
    <property type="match status" value="1"/>
</dbReference>
<dbReference type="FunFam" id="1.10.1200.10:FF:000011">
    <property type="entry name" value="Sterigmatocystin biosynthesis polyketide synthase"/>
    <property type="match status" value="1"/>
</dbReference>
<dbReference type="FunFam" id="3.10.129.110:FF:000001">
    <property type="entry name" value="Sterigmatocystin biosynthesis polyketide synthase"/>
    <property type="match status" value="1"/>
</dbReference>
<dbReference type="FunFam" id="3.40.47.10:FF:000031">
    <property type="entry name" value="Sterigmatocystin biosynthesis polyketide synthase"/>
    <property type="match status" value="1"/>
</dbReference>
<dbReference type="Gene3D" id="3.30.70.3290">
    <property type="match status" value="1"/>
</dbReference>
<dbReference type="Gene3D" id="3.40.47.10">
    <property type="match status" value="1"/>
</dbReference>
<dbReference type="Gene3D" id="1.10.1200.10">
    <property type="entry name" value="ACP-like"/>
    <property type="match status" value="1"/>
</dbReference>
<dbReference type="Gene3D" id="3.40.366.10">
    <property type="entry name" value="Malonyl-Coenzyme A Acyl Carrier Protein, domain 2"/>
    <property type="match status" value="2"/>
</dbReference>
<dbReference type="Gene3D" id="3.10.129.110">
    <property type="entry name" value="Polyketide synthase dehydratase"/>
    <property type="match status" value="1"/>
</dbReference>
<dbReference type="InterPro" id="IPR001227">
    <property type="entry name" value="Ac_transferase_dom_sf"/>
</dbReference>
<dbReference type="InterPro" id="IPR036736">
    <property type="entry name" value="ACP-like_sf"/>
</dbReference>
<dbReference type="InterPro" id="IPR014043">
    <property type="entry name" value="Acyl_transferase_dom"/>
</dbReference>
<dbReference type="InterPro" id="IPR016035">
    <property type="entry name" value="Acyl_Trfase/lysoPLipase"/>
</dbReference>
<dbReference type="InterPro" id="IPR018201">
    <property type="entry name" value="Ketoacyl_synth_AS"/>
</dbReference>
<dbReference type="InterPro" id="IPR014031">
    <property type="entry name" value="Ketoacyl_synth_C"/>
</dbReference>
<dbReference type="InterPro" id="IPR014030">
    <property type="entry name" value="Ketoacyl_synth_N"/>
</dbReference>
<dbReference type="InterPro" id="IPR016036">
    <property type="entry name" value="Malonyl_transacylase_ACP-bd"/>
</dbReference>
<dbReference type="InterPro" id="IPR020841">
    <property type="entry name" value="PKS_Beta-ketoAc_synthase_dom"/>
</dbReference>
<dbReference type="InterPro" id="IPR042104">
    <property type="entry name" value="PKS_dehydratase_sf"/>
</dbReference>
<dbReference type="InterPro" id="IPR049900">
    <property type="entry name" value="PKS_mFAS_DH"/>
</dbReference>
<dbReference type="InterPro" id="IPR050091">
    <property type="entry name" value="PKS_NRPS_Biosynth_Enz"/>
</dbReference>
<dbReference type="InterPro" id="IPR020806">
    <property type="entry name" value="PKS_PP-bd"/>
</dbReference>
<dbReference type="InterPro" id="IPR009081">
    <property type="entry name" value="PP-bd_ACP"/>
</dbReference>
<dbReference type="InterPro" id="IPR030918">
    <property type="entry name" value="PT_fungal_PKS"/>
</dbReference>
<dbReference type="InterPro" id="IPR032088">
    <property type="entry name" value="SAT"/>
</dbReference>
<dbReference type="InterPro" id="IPR016039">
    <property type="entry name" value="Thiolase-like"/>
</dbReference>
<dbReference type="NCBIfam" id="TIGR04532">
    <property type="entry name" value="PT_fungal_PKS"/>
    <property type="match status" value="1"/>
</dbReference>
<dbReference type="PANTHER" id="PTHR43775">
    <property type="entry name" value="FATTY ACID SYNTHASE"/>
    <property type="match status" value="1"/>
</dbReference>
<dbReference type="PANTHER" id="PTHR43775:SF24">
    <property type="entry name" value="NON-REDUCING POLYKETIDE SYNTHASE APTA-RELATED"/>
    <property type="match status" value="1"/>
</dbReference>
<dbReference type="Pfam" id="PF00698">
    <property type="entry name" value="Acyl_transf_1"/>
    <property type="match status" value="1"/>
</dbReference>
<dbReference type="Pfam" id="PF22621">
    <property type="entry name" value="CurL-like_PKS_C"/>
    <property type="match status" value="1"/>
</dbReference>
<dbReference type="Pfam" id="PF00109">
    <property type="entry name" value="ketoacyl-synt"/>
    <property type="match status" value="1"/>
</dbReference>
<dbReference type="Pfam" id="PF02801">
    <property type="entry name" value="Ketoacyl-synt_C"/>
    <property type="match status" value="1"/>
</dbReference>
<dbReference type="Pfam" id="PF00550">
    <property type="entry name" value="PP-binding"/>
    <property type="match status" value="1"/>
</dbReference>
<dbReference type="Pfam" id="PF16073">
    <property type="entry name" value="SAT"/>
    <property type="match status" value="1"/>
</dbReference>
<dbReference type="SMART" id="SM00827">
    <property type="entry name" value="PKS_AT"/>
    <property type="match status" value="1"/>
</dbReference>
<dbReference type="SMART" id="SM00825">
    <property type="entry name" value="PKS_KS"/>
    <property type="match status" value="1"/>
</dbReference>
<dbReference type="SMART" id="SM00823">
    <property type="entry name" value="PKS_PP"/>
    <property type="match status" value="1"/>
</dbReference>
<dbReference type="SUPFAM" id="SSF47336">
    <property type="entry name" value="ACP-like"/>
    <property type="match status" value="1"/>
</dbReference>
<dbReference type="SUPFAM" id="SSF52151">
    <property type="entry name" value="FabD/lysophospholipase-like"/>
    <property type="match status" value="1"/>
</dbReference>
<dbReference type="SUPFAM" id="SSF55048">
    <property type="entry name" value="Probable ACP-binding domain of malonyl-CoA ACP transacylase"/>
    <property type="match status" value="1"/>
</dbReference>
<dbReference type="SUPFAM" id="SSF53901">
    <property type="entry name" value="Thiolase-like"/>
    <property type="match status" value="1"/>
</dbReference>
<dbReference type="PROSITE" id="PS50075">
    <property type="entry name" value="CARRIER"/>
    <property type="match status" value="1"/>
</dbReference>
<dbReference type="PROSITE" id="PS00606">
    <property type="entry name" value="KS3_1"/>
    <property type="match status" value="1"/>
</dbReference>
<dbReference type="PROSITE" id="PS52004">
    <property type="entry name" value="KS3_2"/>
    <property type="match status" value="1"/>
</dbReference>
<dbReference type="PROSITE" id="PS52019">
    <property type="entry name" value="PKS_MFAS_DH"/>
    <property type="match status" value="1"/>
</dbReference>
<gene>
    <name evidence="11" type="primary">aptA</name>
    <name type="ORF">AN6000.2</name>
</gene>
<name>APTA_EMENI</name>
<comment type="function">
    <text evidence="7 8 9">Non-reducing polyketide synthase (NRPKS); part of the gene cluster that mediates the biosynthesis of asperthecin, an anthraquinone pigment (PubMed:18978088, PubMed:21866960). Catalyzes the formation of the aromatic polyketide from acetyl coenzyme A and seven malonyl coenzyme A molecules (PubMed:18978088, PubMed:21866960). Through its product template (PT) domain, catalyzes the cyclization of the polyketide backbone via C6-C11 aldolcondensation (PubMed:20479000). Polyketide is subsequently hydrolyzed from the NRPKS by the action of the hydrolase aptB into endocrocin-9-anthrone (PubMed:18978088). Endocrocin-9-anthrone is then oxidized into endocrocin by aptC (PubMed:18978088). Endocrocin is likely to decarboxylate spontaneously to form emodin which explains why there is no decarboxylase in the asperthecin biosynthesis cluster (PubMed:18978088). Finally, aptC or another endogenous oxygenase catalyzes additional oxidation steps to form asperthecin (PubMed:18978088).</text>
</comment>
<comment type="catalytic activity">
    <reaction evidence="8 9 14">
        <text>holo-[ACP] + 8 malonyl-CoA + acetyl-CoA + 8 H(+) = 3,6,8,9-tetrahydroxy-1-oxo-3-(2-oxopropyl)-1,2,3,4-tetrahydroanthracene-2-carboxyl-[ACP] + 8 CO2 + 9 CoA + 2 H2O</text>
        <dbReference type="Rhea" id="RHEA:64072"/>
        <dbReference type="Rhea" id="RHEA-COMP:9685"/>
        <dbReference type="Rhea" id="RHEA-COMP:16516"/>
        <dbReference type="ChEBI" id="CHEBI:15377"/>
        <dbReference type="ChEBI" id="CHEBI:15378"/>
        <dbReference type="ChEBI" id="CHEBI:16526"/>
        <dbReference type="ChEBI" id="CHEBI:57287"/>
        <dbReference type="ChEBI" id="CHEBI:57288"/>
        <dbReference type="ChEBI" id="CHEBI:57384"/>
        <dbReference type="ChEBI" id="CHEBI:64479"/>
        <dbReference type="ChEBI" id="CHEBI:149685"/>
    </reaction>
    <physiologicalReaction direction="left-to-right" evidence="8 9 14">
        <dbReference type="Rhea" id="RHEA:64073"/>
    </physiologicalReaction>
</comment>
<comment type="cofactor">
    <cofactor evidence="1">
        <name>pantetheine 4'-phosphate</name>
        <dbReference type="ChEBI" id="CHEBI:47942"/>
    </cofactor>
    <text evidence="2">Binds 1 phosphopantetheine covalently.</text>
</comment>
<comment type="pathway">
    <text evidence="9 14">Secondary metabolite biosynthesis.</text>
</comment>
<comment type="induction">
    <text evidence="10">Expression is induced during late sexual development in the dark (PubMed:26773375).</text>
</comment>
<comment type="domain">
    <text evidence="8 14">Multidomain protein; including a starter unit:ACP transacylase (SAT) that selects the starter unit; a ketosynthase (KS) that catalyzes repeated decarboxylative condensation to elongate the polyketide backbone; a malonyl-CoA:ACP transacylase (MAT) that selects and transfers the extender unit malonyl-CoA; a product template (PT) domain that controls the immediate cyclization regioselectivity of the reactive polyketide backbone; and an acyl-carrier protein (ACP) that serves as the tether of the growing and completed polyketide via its phosphopantetheinyl arm (PubMed:18978088, PubMed:20479000).</text>
</comment>
<comment type="disruption phenotype">
    <text evidence="7">Fails to produce asperthecin (PubMed:18978088).</text>
</comment>
<keyword id="KW-0012">Acyltransferase</keyword>
<keyword id="KW-0596">Phosphopantetheine</keyword>
<keyword id="KW-0597">Phosphoprotein</keyword>
<keyword id="KW-1185">Reference proteome</keyword>
<keyword id="KW-0808">Transferase</keyword>
<feature type="chain" id="PRO_0000436108" description="Non-reducing polyketide synthase aptA">
    <location>
        <begin position="1"/>
        <end position="1792"/>
    </location>
</feature>
<feature type="domain" description="Ketosynthase family 3 (KS3)" evidence="4">
    <location>
        <begin position="391"/>
        <end position="824"/>
    </location>
</feature>
<feature type="domain" description="PKS/mFAS DH" evidence="5">
    <location>
        <begin position="1312"/>
        <end position="1621"/>
    </location>
</feature>
<feature type="domain" description="Carrier" evidence="3">
    <location>
        <begin position="1715"/>
        <end position="1792"/>
    </location>
</feature>
<feature type="region of interest" description="N-terminal acylcarrier protein transacylase domain (SAT)" evidence="2">
    <location>
        <begin position="1"/>
        <end position="395"/>
    </location>
</feature>
<feature type="region of interest" description="Malonyl-CoA:ACP transacylase (MAT) domain" evidence="2">
    <location>
        <begin position="926"/>
        <end position="1243"/>
    </location>
</feature>
<feature type="region of interest" description="Product template (PT) domain" evidence="2 8">
    <location>
        <begin position="1308"/>
        <end position="1625"/>
    </location>
</feature>
<feature type="region of interest" description="N-terminal hotdog fold" evidence="5">
    <location>
        <begin position="1312"/>
        <end position="1447"/>
    </location>
</feature>
<feature type="region of interest" description="C-terminal hotdog fold" evidence="5">
    <location>
        <begin position="1475"/>
        <end position="1621"/>
    </location>
</feature>
<feature type="region of interest" description="Disordered" evidence="6">
    <location>
        <begin position="1634"/>
        <end position="1716"/>
    </location>
</feature>
<feature type="compositionally biased region" description="Low complexity" evidence="6">
    <location>
        <begin position="1634"/>
        <end position="1649"/>
    </location>
</feature>
<feature type="compositionally biased region" description="Polar residues" evidence="6">
    <location>
        <begin position="1664"/>
        <end position="1684"/>
    </location>
</feature>
<feature type="compositionally biased region" description="Basic and acidic residues" evidence="6">
    <location>
        <begin position="1694"/>
        <end position="1705"/>
    </location>
</feature>
<feature type="active site" description="For beta-ketoacyl synthase activity" evidence="4">
    <location>
        <position position="564"/>
    </location>
</feature>
<feature type="active site" description="For beta-ketoacyl synthase activity" evidence="4">
    <location>
        <position position="699"/>
    </location>
</feature>
<feature type="active site" description="For beta-ketoacyl synthase activity" evidence="4">
    <location>
        <position position="742"/>
    </location>
</feature>
<feature type="active site" description="Proton acceptor; for dehydratase activity" evidence="5">
    <location>
        <position position="1344"/>
    </location>
</feature>
<feature type="active site" description="Proton donor; for dehydratase activity" evidence="5">
    <location>
        <position position="1533"/>
    </location>
</feature>
<feature type="modified residue" description="O-(pantetheine 4'-phosphoryl)serine" evidence="3">
    <location>
        <position position="1752"/>
    </location>
</feature>
<protein>
    <recommendedName>
        <fullName evidence="13">Non-reducing polyketide synthase aptA</fullName>
        <shortName evidence="12">NRPKS</shortName>
        <ecNumber evidence="8 9 14">2.3.1.-</ecNumber>
    </recommendedName>
    <alternativeName>
        <fullName evidence="11">Asperthecin synthesis protein A</fullName>
    </alternativeName>
</protein>
<proteinExistence type="evidence at protein level"/>
<organism>
    <name type="scientific">Emericella nidulans (strain FGSC A4 / ATCC 38163 / CBS 112.46 / NRRL 194 / M139)</name>
    <name type="common">Aspergillus nidulans</name>
    <dbReference type="NCBI Taxonomy" id="227321"/>
    <lineage>
        <taxon>Eukaryota</taxon>
        <taxon>Fungi</taxon>
        <taxon>Dikarya</taxon>
        <taxon>Ascomycota</taxon>
        <taxon>Pezizomycotina</taxon>
        <taxon>Eurotiomycetes</taxon>
        <taxon>Eurotiomycetidae</taxon>
        <taxon>Eurotiales</taxon>
        <taxon>Aspergillaceae</taxon>
        <taxon>Aspergillus</taxon>
        <taxon>Aspergillus subgen. Nidulantes</taxon>
    </lineage>
</organism>
<accession>Q5B0D0</accession>
<accession>C8V346</accession>
<reference key="1">
    <citation type="journal article" date="2005" name="Nature">
        <title>Sequencing of Aspergillus nidulans and comparative analysis with A. fumigatus and A. oryzae.</title>
        <authorList>
            <person name="Galagan J.E."/>
            <person name="Calvo S.E."/>
            <person name="Cuomo C."/>
            <person name="Ma L.-J."/>
            <person name="Wortman J.R."/>
            <person name="Batzoglou S."/>
            <person name="Lee S.-I."/>
            <person name="Bastuerkmen M."/>
            <person name="Spevak C.C."/>
            <person name="Clutterbuck J."/>
            <person name="Kapitonov V."/>
            <person name="Jurka J."/>
            <person name="Scazzocchio C."/>
            <person name="Farman M.L."/>
            <person name="Butler J."/>
            <person name="Purcell S."/>
            <person name="Harris S."/>
            <person name="Braus G.H."/>
            <person name="Draht O."/>
            <person name="Busch S."/>
            <person name="D'Enfert C."/>
            <person name="Bouchier C."/>
            <person name="Goldman G.H."/>
            <person name="Bell-Pedersen D."/>
            <person name="Griffiths-Jones S."/>
            <person name="Doonan J.H."/>
            <person name="Yu J."/>
            <person name="Vienken K."/>
            <person name="Pain A."/>
            <person name="Freitag M."/>
            <person name="Selker E.U."/>
            <person name="Archer D.B."/>
            <person name="Penalva M.A."/>
            <person name="Oakley B.R."/>
            <person name="Momany M."/>
            <person name="Tanaka T."/>
            <person name="Kumagai T."/>
            <person name="Asai K."/>
            <person name="Machida M."/>
            <person name="Nierman W.C."/>
            <person name="Denning D.W."/>
            <person name="Caddick M.X."/>
            <person name="Hynes M."/>
            <person name="Paoletti M."/>
            <person name="Fischer R."/>
            <person name="Miller B.L."/>
            <person name="Dyer P.S."/>
            <person name="Sachs M.S."/>
            <person name="Osmani S.A."/>
            <person name="Birren B.W."/>
        </authorList>
    </citation>
    <scope>NUCLEOTIDE SEQUENCE [LARGE SCALE GENOMIC DNA]</scope>
    <source>
        <strain>FGSC A4 / ATCC 38163 / CBS 112.46 / NRRL 194 / M139</strain>
    </source>
</reference>
<reference key="2">
    <citation type="journal article" date="2009" name="Fungal Genet. Biol.">
        <title>The 2008 update of the Aspergillus nidulans genome annotation: a community effort.</title>
        <authorList>
            <person name="Wortman J.R."/>
            <person name="Gilsenan J.M."/>
            <person name="Joardar V."/>
            <person name="Deegan J."/>
            <person name="Clutterbuck J."/>
            <person name="Andersen M.R."/>
            <person name="Archer D."/>
            <person name="Bencina M."/>
            <person name="Braus G."/>
            <person name="Coutinho P."/>
            <person name="von Dohren H."/>
            <person name="Doonan J."/>
            <person name="Driessen A.J."/>
            <person name="Durek P."/>
            <person name="Espeso E."/>
            <person name="Fekete E."/>
            <person name="Flipphi M."/>
            <person name="Estrada C.G."/>
            <person name="Geysens S."/>
            <person name="Goldman G."/>
            <person name="de Groot P.W."/>
            <person name="Hansen K."/>
            <person name="Harris S.D."/>
            <person name="Heinekamp T."/>
            <person name="Helmstaedt K."/>
            <person name="Henrissat B."/>
            <person name="Hofmann G."/>
            <person name="Homan T."/>
            <person name="Horio T."/>
            <person name="Horiuchi H."/>
            <person name="James S."/>
            <person name="Jones M."/>
            <person name="Karaffa L."/>
            <person name="Karanyi Z."/>
            <person name="Kato M."/>
            <person name="Keller N."/>
            <person name="Kelly D.E."/>
            <person name="Kiel J.A."/>
            <person name="Kim J.M."/>
            <person name="van der Klei I.J."/>
            <person name="Klis F.M."/>
            <person name="Kovalchuk A."/>
            <person name="Krasevec N."/>
            <person name="Kubicek C.P."/>
            <person name="Liu B."/>
            <person name="Maccabe A."/>
            <person name="Meyer V."/>
            <person name="Mirabito P."/>
            <person name="Miskei M."/>
            <person name="Mos M."/>
            <person name="Mullins J."/>
            <person name="Nelson D.R."/>
            <person name="Nielsen J."/>
            <person name="Oakley B.R."/>
            <person name="Osmani S.A."/>
            <person name="Pakula T."/>
            <person name="Paszewski A."/>
            <person name="Paulsen I."/>
            <person name="Pilsyk S."/>
            <person name="Pocsi I."/>
            <person name="Punt P.J."/>
            <person name="Ram A.F."/>
            <person name="Ren Q."/>
            <person name="Robellet X."/>
            <person name="Robson G."/>
            <person name="Seiboth B."/>
            <person name="van Solingen P."/>
            <person name="Specht T."/>
            <person name="Sun J."/>
            <person name="Taheri-Talesh N."/>
            <person name="Takeshita N."/>
            <person name="Ussery D."/>
            <person name="vanKuyk P.A."/>
            <person name="Visser H."/>
            <person name="van de Vondervoort P.J."/>
            <person name="de Vries R.P."/>
            <person name="Walton J."/>
            <person name="Xiang X."/>
            <person name="Xiong Y."/>
            <person name="Zeng A.P."/>
            <person name="Brandt B.W."/>
            <person name="Cornell M.J."/>
            <person name="van den Hondel C.A."/>
            <person name="Visser J."/>
            <person name="Oliver S.G."/>
            <person name="Turner G."/>
        </authorList>
    </citation>
    <scope>GENOME REANNOTATION</scope>
    <source>
        <strain>FGSC A4 / ATCC 38163 / CBS 112.46 / NRRL 194 / M139</strain>
    </source>
</reference>
<reference key="3">
    <citation type="journal article" date="2008" name="Appl. Environ. Microbiol.">
        <title>Identification and characterization of the asperthecin gene cluster of Aspergillus nidulans.</title>
        <authorList>
            <person name="Szewczyk E."/>
            <person name="Chiang Y.M."/>
            <person name="Oakley C.E."/>
            <person name="Davidson A.D."/>
            <person name="Wang C.C."/>
            <person name="Oakley B.R."/>
        </authorList>
    </citation>
    <scope>FUNCTION</scope>
    <scope>DISRUPTION PHENOTYPE</scope>
    <scope>DOMAIN</scope>
    <scope>CATALYTIC ACTIVITY</scope>
</reference>
<reference key="4">
    <citation type="journal article" date="2010" name="J. Biol. Chem.">
        <title>Classification, prediction, and verification of the regioselectivity of fungal polyketide synthase product template domains.</title>
        <authorList>
            <person name="Li Y."/>
            <person name="Image I.I."/>
            <person name="Xu W."/>
            <person name="Image I."/>
            <person name="Tang Y."/>
            <person name="Image I."/>
        </authorList>
    </citation>
    <scope>FUNCTION</scope>
    <scope>DOMAIN</scope>
    <scope>CATALYTIC ACTIVITY</scope>
</reference>
<reference key="5">
    <citation type="journal article" date="2011" name="J. Am. Chem. Soc.">
        <title>Comparative characterization of fungal anthracenone and naphthacenedione biosynthetic pathways reveals an alpha-hydroxylation-dependent Claisen-like cyclization catalyzed by a dimanganese thioesterase.</title>
        <authorList>
            <person name="Li Y."/>
            <person name="Chooi Y.H."/>
            <person name="Sheng Y."/>
            <person name="Valentine J.S."/>
            <person name="Tang Y."/>
        </authorList>
    </citation>
    <scope>FUNCTION</scope>
    <scope>CATALYTIC ACTIVITY</scope>
</reference>
<reference key="6">
    <citation type="journal article" date="2016" name="Fungal Genet. Biol.">
        <title>Changes of global gene expression and secondary metabolite accumulation during light-dependent Aspergillus nidulans development.</title>
        <authorList>
            <person name="Bayram O."/>
            <person name="Feussner K."/>
            <person name="Dumkow M."/>
            <person name="Herrfurth C."/>
            <person name="Feussner I."/>
            <person name="Braus G.H."/>
        </authorList>
    </citation>
    <scope>INDUCTION</scope>
</reference>